<sequence length="444" mass="50278">MKYTDFLAHPDEIIPTIRMMYADYRLKNMEIKDPSVRFCYNMLNRVSRSFAMVIQQLPVELRDATCVFYLILRALDTVEDDMAIPKEVKIPMLRTFHEHLSDRSWKIKCGYGPYVDLMDNYPLVTDVYLRFDEGTKAVIKDITRRMGNGMADFIDLDEVLTIPQYDLYCHYVAGLCGIGMCKLFVDSGLEKEDLVAEEDLANQMGLFLQKNNIVRDYLEDINELPAPRMFWPKEIWGNYAKQLDEFKDPKNLDKAMLCLNHMVTDALRHCEVGLRSLSLLHNPNILRAVLIPQVMGVRTLTLVYNNPEVFRGVVKMRRGETAKIFVTTTSKLSFFRTYLQFANEMEQKCLTEAKNDPMVALTLKRVQGVQAACRAAIVKAEIAEGAKGPSTAMVLAGALLIAALAYFAYVYSAGGTSLKALPLFGVVIILAIGLFGRNLALKTV</sequence>
<gene>
    <name evidence="5" type="primary">LOS</name>
</gene>
<dbReference type="EC" id="2.5.1.148" evidence="3"/>
<dbReference type="EC" id="2.5.1.21" evidence="3"/>
<dbReference type="EMBL" id="KT388101">
    <property type="protein sequence ID" value="AMV49169.1"/>
    <property type="molecule type" value="mRNA"/>
</dbReference>
<dbReference type="SMR" id="A0A142ZC57"/>
<dbReference type="KEGG" id="ag:AMV49169"/>
<dbReference type="BioCyc" id="MetaCyc:MONOMER-20363"/>
<dbReference type="BRENDA" id="2.5.1.148">
    <property type="organism ID" value="915"/>
</dbReference>
<dbReference type="GO" id="GO:0005789">
    <property type="term" value="C:endoplasmic reticulum membrane"/>
    <property type="evidence" value="ECO:0007669"/>
    <property type="project" value="TreeGrafter"/>
</dbReference>
<dbReference type="GO" id="GO:0046872">
    <property type="term" value="F:metal ion binding"/>
    <property type="evidence" value="ECO:0007669"/>
    <property type="project" value="UniProtKB-KW"/>
</dbReference>
<dbReference type="GO" id="GO:0051996">
    <property type="term" value="F:squalene synthase [NAD(P)H] activity"/>
    <property type="evidence" value="ECO:0000314"/>
    <property type="project" value="UniProtKB"/>
</dbReference>
<dbReference type="GO" id="GO:0045338">
    <property type="term" value="P:farnesyl diphosphate metabolic process"/>
    <property type="evidence" value="ECO:0007669"/>
    <property type="project" value="InterPro"/>
</dbReference>
<dbReference type="GO" id="GO:0016126">
    <property type="term" value="P:sterol biosynthetic process"/>
    <property type="evidence" value="ECO:0000314"/>
    <property type="project" value="UniProtKB"/>
</dbReference>
<dbReference type="CDD" id="cd00683">
    <property type="entry name" value="Trans_IPPS_HH"/>
    <property type="match status" value="1"/>
</dbReference>
<dbReference type="FunFam" id="1.10.600.10:FF:000023">
    <property type="entry name" value="Squalene synthase"/>
    <property type="match status" value="1"/>
</dbReference>
<dbReference type="Gene3D" id="1.10.600.10">
    <property type="entry name" value="Farnesyl Diphosphate Synthase"/>
    <property type="match status" value="1"/>
</dbReference>
<dbReference type="InterPro" id="IPR008949">
    <property type="entry name" value="Isoprenoid_synthase_dom_sf"/>
</dbReference>
<dbReference type="InterPro" id="IPR002060">
    <property type="entry name" value="Squ/phyt_synthse"/>
</dbReference>
<dbReference type="InterPro" id="IPR006449">
    <property type="entry name" value="Squal_synth-like"/>
</dbReference>
<dbReference type="InterPro" id="IPR019845">
    <property type="entry name" value="Squalene/phytoene_synthase_CS"/>
</dbReference>
<dbReference type="InterPro" id="IPR044844">
    <property type="entry name" value="Trans_IPPS_euk-type"/>
</dbReference>
<dbReference type="InterPro" id="IPR033904">
    <property type="entry name" value="Trans_IPPS_HH"/>
</dbReference>
<dbReference type="NCBIfam" id="TIGR01559">
    <property type="entry name" value="squal_synth"/>
    <property type="match status" value="1"/>
</dbReference>
<dbReference type="PANTHER" id="PTHR11626">
    <property type="entry name" value="FARNESYL-DIPHOSPHATE FARNESYLTRANSFERASE"/>
    <property type="match status" value="1"/>
</dbReference>
<dbReference type="PANTHER" id="PTHR11626:SF2">
    <property type="entry name" value="SQUALENE SYNTHASE"/>
    <property type="match status" value="1"/>
</dbReference>
<dbReference type="Pfam" id="PF00494">
    <property type="entry name" value="SQS_PSY"/>
    <property type="match status" value="1"/>
</dbReference>
<dbReference type="SFLD" id="SFLDS00005">
    <property type="entry name" value="Isoprenoid_Synthase_Type_I"/>
    <property type="match status" value="1"/>
</dbReference>
<dbReference type="SFLD" id="SFLDG01018">
    <property type="entry name" value="Squalene/Phytoene_Synthase_Lik"/>
    <property type="match status" value="1"/>
</dbReference>
<dbReference type="SUPFAM" id="SSF48576">
    <property type="entry name" value="Terpenoid synthases"/>
    <property type="match status" value="1"/>
</dbReference>
<dbReference type="PROSITE" id="PS01045">
    <property type="entry name" value="SQUALEN_PHYTOEN_SYN_2"/>
    <property type="match status" value="1"/>
</dbReference>
<organism>
    <name type="scientific">Botryococcus braunii</name>
    <name type="common">Green alga</name>
    <dbReference type="NCBI Taxonomy" id="38881"/>
    <lineage>
        <taxon>Eukaryota</taxon>
        <taxon>Viridiplantae</taxon>
        <taxon>Chlorophyta</taxon>
        <taxon>core chlorophytes</taxon>
        <taxon>Trebouxiophyceae</taxon>
        <taxon>Trebouxiophyceae incertae sedis</taxon>
        <taxon>Elliptochloris clade</taxon>
        <taxon>Botryococcus</taxon>
    </lineage>
</organism>
<comment type="function">
    <text evidence="3 4">Converts the C20 geranylgeranyl diphosphate (GGPP) to the C40 lycopaoctaene, the first committed intermediate in the production of lycopadiene (PubMed:27050299, PubMed:28813599). Converts farnesyl diphosphate (FPP) into squalene, a precursor for sterol biosynthesis in eukaryotes (PubMed:27050299, PubMed:28813599). Converts with low efficiency the C20 phytyl diphosphate (PPP) to the C40 lycopadiene in vitro. This reaction may not have biological significance in vivo (PubMed:27050299).</text>
</comment>
<comment type="catalytic activity">
    <reaction evidence="3">
        <text>2 (2E,6E)-farnesyl diphosphate + NADH + H(+) = squalene + 2 diphosphate + NAD(+)</text>
        <dbReference type="Rhea" id="RHEA:32299"/>
        <dbReference type="ChEBI" id="CHEBI:15378"/>
        <dbReference type="ChEBI" id="CHEBI:15440"/>
        <dbReference type="ChEBI" id="CHEBI:33019"/>
        <dbReference type="ChEBI" id="CHEBI:57540"/>
        <dbReference type="ChEBI" id="CHEBI:57945"/>
        <dbReference type="ChEBI" id="CHEBI:175763"/>
        <dbReference type="EC" id="2.5.1.21"/>
    </reaction>
</comment>
<comment type="catalytic activity">
    <reaction evidence="3">
        <text>2 (2E,6E)-farnesyl diphosphate + NADPH + H(+) = squalene + 2 diphosphate + NADP(+)</text>
        <dbReference type="Rhea" id="RHEA:32295"/>
        <dbReference type="ChEBI" id="CHEBI:15378"/>
        <dbReference type="ChEBI" id="CHEBI:15440"/>
        <dbReference type="ChEBI" id="CHEBI:33019"/>
        <dbReference type="ChEBI" id="CHEBI:57783"/>
        <dbReference type="ChEBI" id="CHEBI:58349"/>
        <dbReference type="ChEBI" id="CHEBI:175763"/>
        <dbReference type="EC" id="2.5.1.21"/>
    </reaction>
</comment>
<comment type="catalytic activity">
    <reaction evidence="3">
        <text>2 (2E,6E,10E)-geranylgeranyl diphosphate + NADPH + H(+) = all-trans-lycopaoctaene + 2 diphosphate + NADP(+)</text>
        <dbReference type="Rhea" id="RHEA:58176"/>
        <dbReference type="ChEBI" id="CHEBI:15378"/>
        <dbReference type="ChEBI" id="CHEBI:33019"/>
        <dbReference type="ChEBI" id="CHEBI:57783"/>
        <dbReference type="ChEBI" id="CHEBI:58349"/>
        <dbReference type="ChEBI" id="CHEBI:58756"/>
        <dbReference type="ChEBI" id="CHEBI:142538"/>
        <dbReference type="EC" id="2.5.1.148"/>
    </reaction>
</comment>
<comment type="cofactor">
    <cofactor evidence="1">
        <name>Mg(2+)</name>
        <dbReference type="ChEBI" id="CHEBI:18420"/>
    </cofactor>
</comment>
<comment type="biophysicochemical properties">
    <kinetics>
        <KM evidence="3">0.07 mM for geranylgeranyl diphosphate</KM>
        <KM evidence="3">0.13 mM for farnesyl diphosphate</KM>
        <KM evidence="3">0.11 mM for phytil diphosphate</KM>
    </kinetics>
</comment>
<comment type="subcellular location">
    <subcellularLocation>
        <location evidence="2">Membrane</location>
        <topology evidence="2">Multi-pass membrane protein</topology>
    </subcellularLocation>
</comment>
<comment type="similarity">
    <text evidence="6">Belongs to the phytoene/squalene synthase family.</text>
</comment>
<feature type="chain" id="PRO_0000446504" description="Lycopaoctaene synthase">
    <location>
        <begin position="1"/>
        <end position="444"/>
    </location>
</feature>
<feature type="transmembrane region" description="Helical" evidence="2">
    <location>
        <begin position="391"/>
        <end position="411"/>
    </location>
</feature>
<feature type="transmembrane region" description="Helical" evidence="2">
    <location>
        <begin position="415"/>
        <end position="435"/>
    </location>
</feature>
<feature type="binding site" evidence="1">
    <location>
        <position position="48"/>
    </location>
    <ligand>
        <name>NADP(+)</name>
        <dbReference type="ChEBI" id="CHEBI:58349"/>
    </ligand>
</feature>
<feature type="binding site" evidence="1">
    <location>
        <position position="73"/>
    </location>
    <ligand>
        <name>NADP(+)</name>
        <dbReference type="ChEBI" id="CHEBI:58349"/>
    </ligand>
</feature>
<feature type="binding site" evidence="1">
    <location>
        <position position="76"/>
    </location>
    <ligand>
        <name>Mg(2+)</name>
        <dbReference type="ChEBI" id="CHEBI:18420"/>
    </ligand>
</feature>
<feature type="binding site" evidence="1">
    <location>
        <position position="79"/>
    </location>
    <ligand>
        <name>Mg(2+)</name>
        <dbReference type="ChEBI" id="CHEBI:18420"/>
    </ligand>
</feature>
<feature type="binding site" evidence="1">
    <location>
        <position position="80"/>
    </location>
    <ligand>
        <name>Mg(2+)</name>
        <dbReference type="ChEBI" id="CHEBI:18420"/>
    </ligand>
</feature>
<feature type="binding site" evidence="1">
    <location>
        <position position="215"/>
    </location>
    <ligand>
        <name>NADP(+)</name>
        <dbReference type="ChEBI" id="CHEBI:58349"/>
    </ligand>
</feature>
<feature type="binding site" evidence="1">
    <location>
        <position position="315"/>
    </location>
    <ligand>
        <name>NADP(+)</name>
        <dbReference type="ChEBI" id="CHEBI:58349"/>
    </ligand>
</feature>
<feature type="binding site" evidence="1">
    <location>
        <position position="317"/>
    </location>
    <ligand>
        <name>NADP(+)</name>
        <dbReference type="ChEBI" id="CHEBI:58349"/>
    </ligand>
</feature>
<feature type="mutagenesis site" description="Loss of lycopaoctaene synthase activity; when associated with F-288." evidence="4">
    <original>S</original>
    <variation>Y</variation>
    <location>
        <position position="276"/>
    </location>
</feature>
<feature type="mutagenesis site" description="Loss of lycopaoctaene synthase activity; when associated with Y-276." evidence="4">
    <original>A</original>
    <variation>F</variation>
    <location>
        <position position="288"/>
    </location>
</feature>
<name>LOS_BOTBR</name>
<reference key="1">
    <citation type="journal article" date="2016" name="Nat. Commun.">
        <title>A squalene synthase-like enzyme initiates production of tetraterpenoid hydrocarbons in Botryococcus braunii Race L.</title>
        <authorList>
            <person name="Thapa H.R."/>
            <person name="Naik M.T."/>
            <person name="Okada S."/>
            <person name="Takada K."/>
            <person name="Molnar I."/>
            <person name="Xu Y."/>
            <person name="Devarenne T.P."/>
        </authorList>
    </citation>
    <scope>NUCLEOTIDE SEQUENCE [MRNA]</scope>
    <scope>FUNCTION</scope>
    <scope>CATALYTIC ACTIVITY</scope>
    <scope>BIOPHYSICOCHEMICAL PROPERTIES</scope>
    <source>
        <strain>Race L</strain>
    </source>
</reference>
<reference key="2">
    <citation type="journal article" date="2017" name="ACS Chem. Biol.">
        <title>Tetraterpene synthase substrate and product specificity in the green microalga Botryococcus braunii race L.</title>
        <authorList>
            <person name="Thapa H.R."/>
            <person name="Tang S."/>
            <person name="Sacchettini J.C."/>
            <person name="Devarenne T.P."/>
        </authorList>
    </citation>
    <scope>FUNCTION</scope>
    <scope>MUTAGENESIS OF SER-276 AND ALA-288</scope>
    <source>
        <strain>Race L</strain>
    </source>
</reference>
<proteinExistence type="evidence at protein level"/>
<protein>
    <recommendedName>
        <fullName evidence="5">Lycopaoctaene synthase</fullName>
        <ecNumber evidence="3">2.5.1.148</ecNumber>
    </recommendedName>
    <alternativeName>
        <fullName evidence="6">Squalene synthase-like LOS</fullName>
        <ecNumber evidence="3">2.5.1.21</ecNumber>
    </alternativeName>
</protein>
<evidence type="ECO:0000250" key="1">
    <source>
        <dbReference type="UniProtKB" id="P37268"/>
    </source>
</evidence>
<evidence type="ECO:0000255" key="2"/>
<evidence type="ECO:0000269" key="3">
    <source>
    </source>
</evidence>
<evidence type="ECO:0000269" key="4">
    <source>
    </source>
</evidence>
<evidence type="ECO:0000303" key="5">
    <source>
    </source>
</evidence>
<evidence type="ECO:0000305" key="6"/>
<keyword id="KW-0460">Magnesium</keyword>
<keyword id="KW-0472">Membrane</keyword>
<keyword id="KW-0479">Metal-binding</keyword>
<keyword id="KW-0520">NAD</keyword>
<keyword id="KW-0521">NADP</keyword>
<keyword id="KW-0808">Transferase</keyword>
<keyword id="KW-0812">Transmembrane</keyword>
<keyword id="KW-1133">Transmembrane helix</keyword>
<accession>A0A142ZC57</accession>